<accession>Q4L5W2</accession>
<sequence length="256" mass="29895">MFKKLIKRNKTKISHNDDLDLHNLPEHVAIIMDGNGRWAKKRKMPRIKGHYEGMQTIKTVTREASDLGIKYLTLYAFSTENWSRPENEVNYIMNLPVNFLKTFLPELIEKNVQIETIGFLDAVPKSTIEAIEHAKEKTKNNTGLKLIFAINYGGRAEIVQSMKSIYDELQRNGQDSKDIDESMINKHLMTHSYPDPELLIRTSGEQRISNFLIWQSSYSEFIFNEKLWPDFDGEEFKNCLKIYQSRQRRFGGLSKE</sequence>
<name>ISPT_STAHJ</name>
<proteinExistence type="inferred from homology"/>
<reference key="1">
    <citation type="journal article" date="2005" name="J. Bacteriol.">
        <title>Whole-genome sequencing of Staphylococcus haemolyticus uncovers the extreme plasticity of its genome and the evolution of human-colonizing staphylococcal species.</title>
        <authorList>
            <person name="Takeuchi F."/>
            <person name="Watanabe S."/>
            <person name="Baba T."/>
            <person name="Yuzawa H."/>
            <person name="Ito T."/>
            <person name="Morimoto Y."/>
            <person name="Kuroda M."/>
            <person name="Cui L."/>
            <person name="Takahashi M."/>
            <person name="Ankai A."/>
            <person name="Baba S."/>
            <person name="Fukui S."/>
            <person name="Lee J.C."/>
            <person name="Hiramatsu K."/>
        </authorList>
    </citation>
    <scope>NUCLEOTIDE SEQUENCE [LARGE SCALE GENOMIC DNA]</scope>
    <source>
        <strain>JCSC1435</strain>
    </source>
</reference>
<protein>
    <recommendedName>
        <fullName evidence="1">Isoprenyl transferase</fullName>
        <ecNumber evidence="1">2.5.1.-</ecNumber>
    </recommendedName>
</protein>
<gene>
    <name evidence="1" type="primary">uppS</name>
    <name type="ordered locus">SH1654</name>
</gene>
<dbReference type="EC" id="2.5.1.-" evidence="1"/>
<dbReference type="EMBL" id="AP006716">
    <property type="protein sequence ID" value="BAE04963.1"/>
    <property type="molecule type" value="Genomic_DNA"/>
</dbReference>
<dbReference type="RefSeq" id="WP_011275940.1">
    <property type="nucleotide sequence ID" value="NC_007168.1"/>
</dbReference>
<dbReference type="SMR" id="Q4L5W2"/>
<dbReference type="KEGG" id="sha:SH1654"/>
<dbReference type="eggNOG" id="COG0020">
    <property type="taxonomic scope" value="Bacteria"/>
</dbReference>
<dbReference type="HOGENOM" id="CLU_038505_1_1_9"/>
<dbReference type="OrthoDB" id="4191603at2"/>
<dbReference type="Proteomes" id="UP000000543">
    <property type="component" value="Chromosome"/>
</dbReference>
<dbReference type="GO" id="GO:0005829">
    <property type="term" value="C:cytosol"/>
    <property type="evidence" value="ECO:0007669"/>
    <property type="project" value="TreeGrafter"/>
</dbReference>
<dbReference type="GO" id="GO:0008834">
    <property type="term" value="F:ditrans,polycis-undecaprenyl-diphosphate synthase [(2E,6E)-farnesyl-diphosphate specific] activity"/>
    <property type="evidence" value="ECO:0007669"/>
    <property type="project" value="TreeGrafter"/>
</dbReference>
<dbReference type="GO" id="GO:0000287">
    <property type="term" value="F:magnesium ion binding"/>
    <property type="evidence" value="ECO:0007669"/>
    <property type="project" value="UniProtKB-UniRule"/>
</dbReference>
<dbReference type="GO" id="GO:0030145">
    <property type="term" value="F:manganese ion binding"/>
    <property type="evidence" value="ECO:0007669"/>
    <property type="project" value="TreeGrafter"/>
</dbReference>
<dbReference type="GO" id="GO:0016094">
    <property type="term" value="P:polyprenol biosynthetic process"/>
    <property type="evidence" value="ECO:0007669"/>
    <property type="project" value="TreeGrafter"/>
</dbReference>
<dbReference type="CDD" id="cd00475">
    <property type="entry name" value="Cis_IPPS"/>
    <property type="match status" value="1"/>
</dbReference>
<dbReference type="FunFam" id="3.40.1180.10:FF:000001">
    <property type="entry name" value="(2E,6E)-farnesyl-diphosphate-specific ditrans,polycis-undecaprenyl-diphosphate synthase"/>
    <property type="match status" value="1"/>
</dbReference>
<dbReference type="Gene3D" id="3.40.1180.10">
    <property type="entry name" value="Decaprenyl diphosphate synthase-like"/>
    <property type="match status" value="1"/>
</dbReference>
<dbReference type="HAMAP" id="MF_01139">
    <property type="entry name" value="ISPT"/>
    <property type="match status" value="1"/>
</dbReference>
<dbReference type="InterPro" id="IPR001441">
    <property type="entry name" value="UPP_synth-like"/>
</dbReference>
<dbReference type="InterPro" id="IPR018520">
    <property type="entry name" value="UPP_synth-like_CS"/>
</dbReference>
<dbReference type="InterPro" id="IPR036424">
    <property type="entry name" value="UPP_synth-like_sf"/>
</dbReference>
<dbReference type="NCBIfam" id="NF011405">
    <property type="entry name" value="PRK14830.1"/>
    <property type="match status" value="1"/>
</dbReference>
<dbReference type="NCBIfam" id="TIGR00055">
    <property type="entry name" value="uppS"/>
    <property type="match status" value="1"/>
</dbReference>
<dbReference type="PANTHER" id="PTHR10291:SF0">
    <property type="entry name" value="DEHYDRODOLICHYL DIPHOSPHATE SYNTHASE 2"/>
    <property type="match status" value="1"/>
</dbReference>
<dbReference type="PANTHER" id="PTHR10291">
    <property type="entry name" value="DEHYDRODOLICHYL DIPHOSPHATE SYNTHASE FAMILY MEMBER"/>
    <property type="match status" value="1"/>
</dbReference>
<dbReference type="Pfam" id="PF01255">
    <property type="entry name" value="Prenyltransf"/>
    <property type="match status" value="1"/>
</dbReference>
<dbReference type="SUPFAM" id="SSF64005">
    <property type="entry name" value="Undecaprenyl diphosphate synthase"/>
    <property type="match status" value="1"/>
</dbReference>
<dbReference type="PROSITE" id="PS01066">
    <property type="entry name" value="UPP_SYNTHASE"/>
    <property type="match status" value="1"/>
</dbReference>
<organism>
    <name type="scientific">Staphylococcus haemolyticus (strain JCSC1435)</name>
    <dbReference type="NCBI Taxonomy" id="279808"/>
    <lineage>
        <taxon>Bacteria</taxon>
        <taxon>Bacillati</taxon>
        <taxon>Bacillota</taxon>
        <taxon>Bacilli</taxon>
        <taxon>Bacillales</taxon>
        <taxon>Staphylococcaceae</taxon>
        <taxon>Staphylococcus</taxon>
    </lineage>
</organism>
<feature type="chain" id="PRO_0000123679" description="Isoprenyl transferase">
    <location>
        <begin position="1"/>
        <end position="256"/>
    </location>
</feature>
<feature type="active site" evidence="1">
    <location>
        <position position="33"/>
    </location>
</feature>
<feature type="active site" description="Proton acceptor" evidence="1">
    <location>
        <position position="81"/>
    </location>
</feature>
<feature type="binding site" evidence="1">
    <location>
        <position position="33"/>
    </location>
    <ligand>
        <name>Mg(2+)</name>
        <dbReference type="ChEBI" id="CHEBI:18420"/>
    </ligand>
</feature>
<feature type="binding site" evidence="1">
    <location>
        <begin position="34"/>
        <end position="37"/>
    </location>
    <ligand>
        <name>substrate</name>
    </ligand>
</feature>
<feature type="binding site" evidence="1">
    <location>
        <position position="38"/>
    </location>
    <ligand>
        <name>substrate</name>
    </ligand>
</feature>
<feature type="binding site" evidence="1">
    <location>
        <position position="46"/>
    </location>
    <ligand>
        <name>substrate</name>
    </ligand>
</feature>
<feature type="binding site" evidence="1">
    <location>
        <position position="50"/>
    </location>
    <ligand>
        <name>substrate</name>
    </ligand>
</feature>
<feature type="binding site" evidence="1">
    <location>
        <begin position="78"/>
        <end position="80"/>
    </location>
    <ligand>
        <name>substrate</name>
    </ligand>
</feature>
<feature type="binding site" evidence="1">
    <location>
        <position position="82"/>
    </location>
    <ligand>
        <name>substrate</name>
    </ligand>
</feature>
<feature type="binding site" evidence="1">
    <location>
        <position position="84"/>
    </location>
    <ligand>
        <name>substrate</name>
    </ligand>
</feature>
<feature type="binding site" evidence="1">
    <location>
        <position position="201"/>
    </location>
    <ligand>
        <name>substrate</name>
    </ligand>
</feature>
<feature type="binding site" evidence="1">
    <location>
        <begin position="207"/>
        <end position="209"/>
    </location>
    <ligand>
        <name>substrate</name>
    </ligand>
</feature>
<feature type="binding site" evidence="1">
    <location>
        <position position="220"/>
    </location>
    <ligand>
        <name>Mg(2+)</name>
        <dbReference type="ChEBI" id="CHEBI:18420"/>
    </ligand>
</feature>
<keyword id="KW-0460">Magnesium</keyword>
<keyword id="KW-0479">Metal-binding</keyword>
<keyword id="KW-0808">Transferase</keyword>
<comment type="function">
    <text evidence="1">Catalyzes the condensation of isopentenyl diphosphate (IPP) with allylic pyrophosphates generating different type of terpenoids.</text>
</comment>
<comment type="cofactor">
    <cofactor evidence="1">
        <name>Mg(2+)</name>
        <dbReference type="ChEBI" id="CHEBI:18420"/>
    </cofactor>
    <text evidence="1">Binds 2 magnesium ions per subunit.</text>
</comment>
<comment type="subunit">
    <text evidence="1">Homodimer.</text>
</comment>
<comment type="similarity">
    <text evidence="1">Belongs to the UPP synthase family.</text>
</comment>
<evidence type="ECO:0000255" key="1">
    <source>
        <dbReference type="HAMAP-Rule" id="MF_01139"/>
    </source>
</evidence>